<keyword id="KW-1185">Reference proteome</keyword>
<keyword id="KW-0687">Ribonucleoprotein</keyword>
<keyword id="KW-0689">Ribosomal protein</keyword>
<evidence type="ECO:0000255" key="1">
    <source>
        <dbReference type="HAMAP-Rule" id="MF_00358"/>
    </source>
</evidence>
<evidence type="ECO:0000256" key="2">
    <source>
        <dbReference type="SAM" id="MobiDB-lite"/>
    </source>
</evidence>
<evidence type="ECO:0000305" key="3"/>
<sequence>MQVLVRDNNVDQALRVLKKKMQREGVFREMKQRRSYEKPSERKTREKSEAIRRARKLARKQAIREGLLPAPPKKKLPERKPPLPQTAARPAG</sequence>
<dbReference type="EMBL" id="BA000040">
    <property type="protein sequence ID" value="BAC45630.1"/>
    <property type="status" value="ALT_INIT"/>
    <property type="molecule type" value="Genomic_DNA"/>
</dbReference>
<dbReference type="RefSeq" id="NP_767005.2">
    <property type="nucleotide sequence ID" value="NC_004463.1"/>
</dbReference>
<dbReference type="RefSeq" id="WP_011083197.1">
    <property type="nucleotide sequence ID" value="NC_004463.1"/>
</dbReference>
<dbReference type="SMR" id="Q89XE9"/>
<dbReference type="FunCoup" id="Q89XE9">
    <property type="interactions" value="607"/>
</dbReference>
<dbReference type="STRING" id="224911.AAV28_41065"/>
<dbReference type="EnsemblBacteria" id="BAC45630">
    <property type="protein sequence ID" value="BAC45630"/>
    <property type="gene ID" value="BAC45630"/>
</dbReference>
<dbReference type="GeneID" id="46495511"/>
<dbReference type="KEGG" id="bja:blr0365"/>
<dbReference type="PATRIC" id="fig|224911.44.peg.8888"/>
<dbReference type="eggNOG" id="COG0828">
    <property type="taxonomic scope" value="Bacteria"/>
</dbReference>
<dbReference type="HOGENOM" id="CLU_159258_0_0_5"/>
<dbReference type="InParanoid" id="Q89XE9"/>
<dbReference type="OrthoDB" id="9811907at2"/>
<dbReference type="PhylomeDB" id="Q89XE9"/>
<dbReference type="Proteomes" id="UP000002526">
    <property type="component" value="Chromosome"/>
</dbReference>
<dbReference type="GO" id="GO:1990904">
    <property type="term" value="C:ribonucleoprotein complex"/>
    <property type="evidence" value="ECO:0007669"/>
    <property type="project" value="UniProtKB-KW"/>
</dbReference>
<dbReference type="GO" id="GO:0005840">
    <property type="term" value="C:ribosome"/>
    <property type="evidence" value="ECO:0007669"/>
    <property type="project" value="UniProtKB-KW"/>
</dbReference>
<dbReference type="GO" id="GO:0003735">
    <property type="term" value="F:structural constituent of ribosome"/>
    <property type="evidence" value="ECO:0007669"/>
    <property type="project" value="InterPro"/>
</dbReference>
<dbReference type="GO" id="GO:0006412">
    <property type="term" value="P:translation"/>
    <property type="evidence" value="ECO:0007669"/>
    <property type="project" value="UniProtKB-UniRule"/>
</dbReference>
<dbReference type="Gene3D" id="1.20.5.1150">
    <property type="entry name" value="Ribosomal protein S8"/>
    <property type="match status" value="1"/>
</dbReference>
<dbReference type="HAMAP" id="MF_00358">
    <property type="entry name" value="Ribosomal_bS21"/>
    <property type="match status" value="1"/>
</dbReference>
<dbReference type="InterPro" id="IPR001911">
    <property type="entry name" value="Ribosomal_bS21"/>
</dbReference>
<dbReference type="InterPro" id="IPR038380">
    <property type="entry name" value="Ribosomal_bS21_sf"/>
</dbReference>
<dbReference type="NCBIfam" id="TIGR00030">
    <property type="entry name" value="S21p"/>
    <property type="match status" value="1"/>
</dbReference>
<dbReference type="PANTHER" id="PTHR21109">
    <property type="entry name" value="MITOCHONDRIAL 28S RIBOSOMAL PROTEIN S21"/>
    <property type="match status" value="1"/>
</dbReference>
<dbReference type="PANTHER" id="PTHR21109:SF0">
    <property type="entry name" value="SMALL RIBOSOMAL SUBUNIT PROTEIN BS21M"/>
    <property type="match status" value="1"/>
</dbReference>
<dbReference type="Pfam" id="PF01165">
    <property type="entry name" value="Ribosomal_S21"/>
    <property type="match status" value="1"/>
</dbReference>
<accession>Q89XE9</accession>
<comment type="similarity">
    <text evidence="1">Belongs to the bacterial ribosomal protein bS21 family.</text>
</comment>
<comment type="sequence caution" evidence="3">
    <conflict type="erroneous initiation">
        <sequence resource="EMBL-CDS" id="BAC45630"/>
    </conflict>
    <text>Extended N-terminus.</text>
</comment>
<protein>
    <recommendedName>
        <fullName evidence="1">Small ribosomal subunit protein bS21A</fullName>
    </recommendedName>
    <alternativeName>
        <fullName evidence="3">30S ribosomal protein S21 1</fullName>
    </alternativeName>
</protein>
<proteinExistence type="inferred from homology"/>
<feature type="chain" id="PRO_0000266632" description="Small ribosomal subunit protein bS21A">
    <location>
        <begin position="1"/>
        <end position="92"/>
    </location>
</feature>
<feature type="region of interest" description="Disordered" evidence="2">
    <location>
        <begin position="25"/>
        <end position="92"/>
    </location>
</feature>
<feature type="compositionally biased region" description="Basic and acidic residues" evidence="2">
    <location>
        <begin position="25"/>
        <end position="52"/>
    </location>
</feature>
<gene>
    <name evidence="1" type="primary">rpsU1</name>
    <name type="ordered locus">blr0365</name>
</gene>
<organism>
    <name type="scientific">Bradyrhizobium diazoefficiens (strain JCM 10833 / BCRC 13528 / IAM 13628 / NBRC 14792 / USDA 110)</name>
    <dbReference type="NCBI Taxonomy" id="224911"/>
    <lineage>
        <taxon>Bacteria</taxon>
        <taxon>Pseudomonadati</taxon>
        <taxon>Pseudomonadota</taxon>
        <taxon>Alphaproteobacteria</taxon>
        <taxon>Hyphomicrobiales</taxon>
        <taxon>Nitrobacteraceae</taxon>
        <taxon>Bradyrhizobium</taxon>
    </lineage>
</organism>
<reference key="1">
    <citation type="journal article" date="2002" name="DNA Res.">
        <title>Complete genomic sequence of nitrogen-fixing symbiotic bacterium Bradyrhizobium japonicum USDA110.</title>
        <authorList>
            <person name="Kaneko T."/>
            <person name="Nakamura Y."/>
            <person name="Sato S."/>
            <person name="Minamisawa K."/>
            <person name="Uchiumi T."/>
            <person name="Sasamoto S."/>
            <person name="Watanabe A."/>
            <person name="Idesawa K."/>
            <person name="Iriguchi M."/>
            <person name="Kawashima K."/>
            <person name="Kohara M."/>
            <person name="Matsumoto M."/>
            <person name="Shimpo S."/>
            <person name="Tsuruoka H."/>
            <person name="Wada T."/>
            <person name="Yamada M."/>
            <person name="Tabata S."/>
        </authorList>
    </citation>
    <scope>NUCLEOTIDE SEQUENCE [LARGE SCALE GENOMIC DNA]</scope>
    <source>
        <strain>JCM 10833 / BCRC 13528 / IAM 13628 / NBRC 14792 / USDA 110</strain>
    </source>
</reference>
<name>RS211_BRADU</name>